<name>AROB_SHESH</name>
<feature type="chain" id="PRO_1000094616" description="3-dehydroquinate synthase">
    <location>
        <begin position="1"/>
        <end position="358"/>
    </location>
</feature>
<feature type="binding site" evidence="1">
    <location>
        <begin position="70"/>
        <end position="75"/>
    </location>
    <ligand>
        <name>NAD(+)</name>
        <dbReference type="ChEBI" id="CHEBI:57540"/>
    </ligand>
</feature>
<feature type="binding site" evidence="1">
    <location>
        <begin position="104"/>
        <end position="108"/>
    </location>
    <ligand>
        <name>NAD(+)</name>
        <dbReference type="ChEBI" id="CHEBI:57540"/>
    </ligand>
</feature>
<feature type="binding site" evidence="1">
    <location>
        <begin position="128"/>
        <end position="129"/>
    </location>
    <ligand>
        <name>NAD(+)</name>
        <dbReference type="ChEBI" id="CHEBI:57540"/>
    </ligand>
</feature>
<feature type="binding site" evidence="1">
    <location>
        <position position="141"/>
    </location>
    <ligand>
        <name>NAD(+)</name>
        <dbReference type="ChEBI" id="CHEBI:57540"/>
    </ligand>
</feature>
<feature type="binding site" evidence="1">
    <location>
        <position position="150"/>
    </location>
    <ligand>
        <name>NAD(+)</name>
        <dbReference type="ChEBI" id="CHEBI:57540"/>
    </ligand>
</feature>
<feature type="binding site" evidence="1">
    <location>
        <begin position="168"/>
        <end position="171"/>
    </location>
    <ligand>
        <name>NAD(+)</name>
        <dbReference type="ChEBI" id="CHEBI:57540"/>
    </ligand>
</feature>
<feature type="binding site" evidence="1">
    <location>
        <position position="183"/>
    </location>
    <ligand>
        <name>Zn(2+)</name>
        <dbReference type="ChEBI" id="CHEBI:29105"/>
    </ligand>
</feature>
<feature type="binding site" evidence="1">
    <location>
        <position position="246"/>
    </location>
    <ligand>
        <name>Zn(2+)</name>
        <dbReference type="ChEBI" id="CHEBI:29105"/>
    </ligand>
</feature>
<feature type="binding site" evidence="1">
    <location>
        <position position="263"/>
    </location>
    <ligand>
        <name>Zn(2+)</name>
        <dbReference type="ChEBI" id="CHEBI:29105"/>
    </ligand>
</feature>
<comment type="function">
    <text evidence="1">Catalyzes the conversion of 3-deoxy-D-arabino-heptulosonate 7-phosphate (DAHP) to dehydroquinate (DHQ).</text>
</comment>
<comment type="catalytic activity">
    <reaction evidence="1">
        <text>7-phospho-2-dehydro-3-deoxy-D-arabino-heptonate = 3-dehydroquinate + phosphate</text>
        <dbReference type="Rhea" id="RHEA:21968"/>
        <dbReference type="ChEBI" id="CHEBI:32364"/>
        <dbReference type="ChEBI" id="CHEBI:43474"/>
        <dbReference type="ChEBI" id="CHEBI:58394"/>
        <dbReference type="EC" id="4.2.3.4"/>
    </reaction>
</comment>
<comment type="cofactor">
    <cofactor evidence="1">
        <name>Co(2+)</name>
        <dbReference type="ChEBI" id="CHEBI:48828"/>
    </cofactor>
    <cofactor evidence="1">
        <name>Zn(2+)</name>
        <dbReference type="ChEBI" id="CHEBI:29105"/>
    </cofactor>
    <text evidence="1">Binds 1 divalent metal cation per subunit. Can use either Co(2+) or Zn(2+).</text>
</comment>
<comment type="cofactor">
    <cofactor evidence="1">
        <name>NAD(+)</name>
        <dbReference type="ChEBI" id="CHEBI:57540"/>
    </cofactor>
</comment>
<comment type="pathway">
    <text evidence="1">Metabolic intermediate biosynthesis; chorismate biosynthesis; chorismate from D-erythrose 4-phosphate and phosphoenolpyruvate: step 2/7.</text>
</comment>
<comment type="subcellular location">
    <subcellularLocation>
        <location evidence="1">Cytoplasm</location>
    </subcellularLocation>
</comment>
<comment type="similarity">
    <text evidence="1">Belongs to the sugar phosphate cyclases superfamily. Dehydroquinate synthase family.</text>
</comment>
<keyword id="KW-0028">Amino-acid biosynthesis</keyword>
<keyword id="KW-0057">Aromatic amino acid biosynthesis</keyword>
<keyword id="KW-0170">Cobalt</keyword>
<keyword id="KW-0963">Cytoplasm</keyword>
<keyword id="KW-0456">Lyase</keyword>
<keyword id="KW-0479">Metal-binding</keyword>
<keyword id="KW-0520">NAD</keyword>
<keyword id="KW-0547">Nucleotide-binding</keyword>
<keyword id="KW-1185">Reference proteome</keyword>
<keyword id="KW-0862">Zinc</keyword>
<organism>
    <name type="scientific">Shewanella sediminis (strain HAW-EB3)</name>
    <dbReference type="NCBI Taxonomy" id="425104"/>
    <lineage>
        <taxon>Bacteria</taxon>
        <taxon>Pseudomonadati</taxon>
        <taxon>Pseudomonadota</taxon>
        <taxon>Gammaproteobacteria</taxon>
        <taxon>Alteromonadales</taxon>
        <taxon>Shewanellaceae</taxon>
        <taxon>Shewanella</taxon>
    </lineage>
</organism>
<reference key="1">
    <citation type="submission" date="2007-08" db="EMBL/GenBank/DDBJ databases">
        <title>Complete sequence of Shewanella sediminis HAW-EB3.</title>
        <authorList>
            <consortium name="US DOE Joint Genome Institute"/>
            <person name="Copeland A."/>
            <person name="Lucas S."/>
            <person name="Lapidus A."/>
            <person name="Barry K."/>
            <person name="Glavina del Rio T."/>
            <person name="Dalin E."/>
            <person name="Tice H."/>
            <person name="Pitluck S."/>
            <person name="Chertkov O."/>
            <person name="Brettin T."/>
            <person name="Bruce D."/>
            <person name="Detter J.C."/>
            <person name="Han C."/>
            <person name="Schmutz J."/>
            <person name="Larimer F."/>
            <person name="Land M."/>
            <person name="Hauser L."/>
            <person name="Kyrpides N."/>
            <person name="Kim E."/>
            <person name="Zhao J.-S."/>
            <person name="Richardson P."/>
        </authorList>
    </citation>
    <scope>NUCLEOTIDE SEQUENCE [LARGE SCALE GENOMIC DNA]</scope>
    <source>
        <strain>HAW-EB3</strain>
    </source>
</reference>
<protein>
    <recommendedName>
        <fullName evidence="1">3-dehydroquinate synthase</fullName>
        <shortName evidence="1">DHQS</shortName>
        <ecNumber evidence="1">4.2.3.4</ecNumber>
    </recommendedName>
</protein>
<sequence length="358" mass="39459">MKQIQVDLGVRSYPIIFSQNLMSCGEHFARYLQDKNILIVTNETIAPLYLEKLQTVLSSFNCVAPVILPDGEQYKTLEQMDSIFTSLLQQNLGRDTVLIALGGGVVGDMTGFAAASYQRGIDFIQVPTTLLAQVDSSVGGKTAVNHPLGKNMIGAFYQPKMVMIDIDCLNTLPPREFSAGMAEVIKYGIIWDAEFFKWLEDNIEQLKSLDAQALTYAIGRCCEIKAEVVARDETEQGVRALLNLGHTFGHAIEAEMGYGVWLHGEAVAAGTVLAANTASGMDLIDESIVCRIIKLFEAFDLPVSPPNSMNFEDFIRHMRRDKKVLKGQLRLVLPEAIGQAGIYCEVSDELLETVIRCA</sequence>
<dbReference type="EC" id="4.2.3.4" evidence="1"/>
<dbReference type="EMBL" id="CP000821">
    <property type="protein sequence ID" value="ABV38868.1"/>
    <property type="molecule type" value="Genomic_DNA"/>
</dbReference>
<dbReference type="RefSeq" id="WP_012144597.1">
    <property type="nucleotide sequence ID" value="NC_009831.1"/>
</dbReference>
<dbReference type="SMR" id="A8G195"/>
<dbReference type="STRING" id="425104.Ssed_4264"/>
<dbReference type="KEGG" id="sse:Ssed_4264"/>
<dbReference type="eggNOG" id="COG0337">
    <property type="taxonomic scope" value="Bacteria"/>
</dbReference>
<dbReference type="HOGENOM" id="CLU_001201_0_2_6"/>
<dbReference type="OrthoDB" id="9806583at2"/>
<dbReference type="UniPathway" id="UPA00053">
    <property type="reaction ID" value="UER00085"/>
</dbReference>
<dbReference type="Proteomes" id="UP000002015">
    <property type="component" value="Chromosome"/>
</dbReference>
<dbReference type="GO" id="GO:0005737">
    <property type="term" value="C:cytoplasm"/>
    <property type="evidence" value="ECO:0007669"/>
    <property type="project" value="UniProtKB-SubCell"/>
</dbReference>
<dbReference type="GO" id="GO:0003856">
    <property type="term" value="F:3-dehydroquinate synthase activity"/>
    <property type="evidence" value="ECO:0007669"/>
    <property type="project" value="UniProtKB-UniRule"/>
</dbReference>
<dbReference type="GO" id="GO:0046872">
    <property type="term" value="F:metal ion binding"/>
    <property type="evidence" value="ECO:0007669"/>
    <property type="project" value="UniProtKB-KW"/>
</dbReference>
<dbReference type="GO" id="GO:0000166">
    <property type="term" value="F:nucleotide binding"/>
    <property type="evidence" value="ECO:0007669"/>
    <property type="project" value="UniProtKB-KW"/>
</dbReference>
<dbReference type="GO" id="GO:0008652">
    <property type="term" value="P:amino acid biosynthetic process"/>
    <property type="evidence" value="ECO:0007669"/>
    <property type="project" value="UniProtKB-KW"/>
</dbReference>
<dbReference type="GO" id="GO:0009073">
    <property type="term" value="P:aromatic amino acid family biosynthetic process"/>
    <property type="evidence" value="ECO:0007669"/>
    <property type="project" value="UniProtKB-KW"/>
</dbReference>
<dbReference type="GO" id="GO:0009423">
    <property type="term" value="P:chorismate biosynthetic process"/>
    <property type="evidence" value="ECO:0007669"/>
    <property type="project" value="UniProtKB-UniRule"/>
</dbReference>
<dbReference type="CDD" id="cd08195">
    <property type="entry name" value="DHQS"/>
    <property type="match status" value="1"/>
</dbReference>
<dbReference type="FunFam" id="1.20.1090.10:FF:000002">
    <property type="entry name" value="3-dehydroquinate synthase"/>
    <property type="match status" value="1"/>
</dbReference>
<dbReference type="FunFam" id="3.40.50.1970:FF:000001">
    <property type="entry name" value="3-dehydroquinate synthase"/>
    <property type="match status" value="1"/>
</dbReference>
<dbReference type="Gene3D" id="3.40.50.1970">
    <property type="match status" value="1"/>
</dbReference>
<dbReference type="Gene3D" id="1.20.1090.10">
    <property type="entry name" value="Dehydroquinate synthase-like - alpha domain"/>
    <property type="match status" value="1"/>
</dbReference>
<dbReference type="HAMAP" id="MF_00110">
    <property type="entry name" value="DHQ_synthase"/>
    <property type="match status" value="1"/>
</dbReference>
<dbReference type="InterPro" id="IPR050071">
    <property type="entry name" value="Dehydroquinate_synthase"/>
</dbReference>
<dbReference type="InterPro" id="IPR016037">
    <property type="entry name" value="DHQ_synth_AroB"/>
</dbReference>
<dbReference type="InterPro" id="IPR030963">
    <property type="entry name" value="DHQ_synth_fam"/>
</dbReference>
<dbReference type="InterPro" id="IPR030960">
    <property type="entry name" value="DHQS/DOIS_N"/>
</dbReference>
<dbReference type="InterPro" id="IPR056179">
    <property type="entry name" value="DHQS_C"/>
</dbReference>
<dbReference type="NCBIfam" id="TIGR01357">
    <property type="entry name" value="aroB"/>
    <property type="match status" value="1"/>
</dbReference>
<dbReference type="PANTHER" id="PTHR43622">
    <property type="entry name" value="3-DEHYDROQUINATE SYNTHASE"/>
    <property type="match status" value="1"/>
</dbReference>
<dbReference type="PANTHER" id="PTHR43622:SF7">
    <property type="entry name" value="3-DEHYDROQUINATE SYNTHASE, CHLOROPLASTIC"/>
    <property type="match status" value="1"/>
</dbReference>
<dbReference type="Pfam" id="PF01761">
    <property type="entry name" value="DHQ_synthase"/>
    <property type="match status" value="1"/>
</dbReference>
<dbReference type="Pfam" id="PF24621">
    <property type="entry name" value="DHQS_C"/>
    <property type="match status" value="1"/>
</dbReference>
<dbReference type="PIRSF" id="PIRSF001455">
    <property type="entry name" value="DHQ_synth"/>
    <property type="match status" value="1"/>
</dbReference>
<dbReference type="SUPFAM" id="SSF56796">
    <property type="entry name" value="Dehydroquinate synthase-like"/>
    <property type="match status" value="1"/>
</dbReference>
<evidence type="ECO:0000255" key="1">
    <source>
        <dbReference type="HAMAP-Rule" id="MF_00110"/>
    </source>
</evidence>
<gene>
    <name evidence="1" type="primary">aroB</name>
    <name type="ordered locus">Ssed_4264</name>
</gene>
<accession>A8G195</accession>
<proteinExistence type="inferred from homology"/>